<proteinExistence type="inferred from homology"/>
<protein>
    <recommendedName>
        <fullName evidence="1">Large ribosomal subunit protein bL12</fullName>
    </recommendedName>
    <alternativeName>
        <fullName evidence="2">50S ribosomal protein L7/L12</fullName>
    </alternativeName>
</protein>
<feature type="chain" id="PRO_1000079807" description="Large ribosomal subunit protein bL12">
    <location>
        <begin position="1"/>
        <end position="128"/>
    </location>
</feature>
<comment type="function">
    <text evidence="1">Forms part of the ribosomal stalk which helps the ribosome interact with GTP-bound translation factors. Is thus essential for accurate translation.</text>
</comment>
<comment type="subunit">
    <text evidence="1">Homodimer. Part of the ribosomal stalk of the 50S ribosomal subunit. Forms a multimeric L10(L12)X complex, where L10 forms an elongated spine to which 2 to 4 L12 dimers bind in a sequential fashion. Binds GTP-bound translation factors.</text>
</comment>
<comment type="similarity">
    <text evidence="1">Belongs to the bacterial ribosomal protein bL12 family.</text>
</comment>
<reference key="1">
    <citation type="submission" date="2006-06" db="EMBL/GenBank/DDBJ databases">
        <title>Complete sequence of Rubrobacter xylanophilus DSM 9941.</title>
        <authorList>
            <consortium name="US DOE Joint Genome Institute"/>
            <person name="Copeland A."/>
            <person name="Lucas S."/>
            <person name="Lapidus A."/>
            <person name="Barry K."/>
            <person name="Detter J.C."/>
            <person name="Glavina del Rio T."/>
            <person name="Hammon N."/>
            <person name="Israni S."/>
            <person name="Dalin E."/>
            <person name="Tice H."/>
            <person name="Pitluck S."/>
            <person name="Munk A.C."/>
            <person name="Brettin T."/>
            <person name="Bruce D."/>
            <person name="Han C."/>
            <person name="Tapia R."/>
            <person name="Gilna P."/>
            <person name="Schmutz J."/>
            <person name="Larimer F."/>
            <person name="Land M."/>
            <person name="Hauser L."/>
            <person name="Kyrpides N."/>
            <person name="Lykidis A."/>
            <person name="da Costa M.S."/>
            <person name="Rainey F.A."/>
            <person name="Empadinhas N."/>
            <person name="Jolivet E."/>
            <person name="Battista J.R."/>
            <person name="Richardson P."/>
        </authorList>
    </citation>
    <scope>NUCLEOTIDE SEQUENCE [LARGE SCALE GENOMIC DNA]</scope>
    <source>
        <strain>DSM 9941 / JCM 11954 / NBRC 16129 / PRD-1</strain>
    </source>
</reference>
<name>RL7_RUBXD</name>
<dbReference type="EMBL" id="CP000386">
    <property type="protein sequence ID" value="ABG05107.1"/>
    <property type="molecule type" value="Genomic_DNA"/>
</dbReference>
<dbReference type="RefSeq" id="WP_011565122.1">
    <property type="nucleotide sequence ID" value="NC_008148.1"/>
</dbReference>
<dbReference type="SMR" id="Q1AU21"/>
<dbReference type="STRING" id="266117.Rxyl_2163"/>
<dbReference type="KEGG" id="rxy:Rxyl_2163"/>
<dbReference type="eggNOG" id="COG0222">
    <property type="taxonomic scope" value="Bacteria"/>
</dbReference>
<dbReference type="HOGENOM" id="CLU_086499_3_2_11"/>
<dbReference type="OrthoDB" id="9811748at2"/>
<dbReference type="PhylomeDB" id="Q1AU21"/>
<dbReference type="Proteomes" id="UP000006637">
    <property type="component" value="Chromosome"/>
</dbReference>
<dbReference type="GO" id="GO:0022625">
    <property type="term" value="C:cytosolic large ribosomal subunit"/>
    <property type="evidence" value="ECO:0007669"/>
    <property type="project" value="TreeGrafter"/>
</dbReference>
<dbReference type="GO" id="GO:0003729">
    <property type="term" value="F:mRNA binding"/>
    <property type="evidence" value="ECO:0007669"/>
    <property type="project" value="TreeGrafter"/>
</dbReference>
<dbReference type="GO" id="GO:0003735">
    <property type="term" value="F:structural constituent of ribosome"/>
    <property type="evidence" value="ECO:0007669"/>
    <property type="project" value="InterPro"/>
</dbReference>
<dbReference type="GO" id="GO:0006412">
    <property type="term" value="P:translation"/>
    <property type="evidence" value="ECO:0007669"/>
    <property type="project" value="UniProtKB-UniRule"/>
</dbReference>
<dbReference type="CDD" id="cd00387">
    <property type="entry name" value="Ribosomal_L7_L12"/>
    <property type="match status" value="1"/>
</dbReference>
<dbReference type="FunFam" id="3.30.1390.10:FF:000001">
    <property type="entry name" value="50S ribosomal protein L7/L12"/>
    <property type="match status" value="1"/>
</dbReference>
<dbReference type="Gene3D" id="3.30.1390.10">
    <property type="match status" value="1"/>
</dbReference>
<dbReference type="Gene3D" id="1.20.5.710">
    <property type="entry name" value="Single helix bin"/>
    <property type="match status" value="1"/>
</dbReference>
<dbReference type="HAMAP" id="MF_00368">
    <property type="entry name" value="Ribosomal_bL12"/>
    <property type="match status" value="1"/>
</dbReference>
<dbReference type="InterPro" id="IPR000206">
    <property type="entry name" value="Ribosomal_bL12"/>
</dbReference>
<dbReference type="InterPro" id="IPR013823">
    <property type="entry name" value="Ribosomal_bL12_C"/>
</dbReference>
<dbReference type="InterPro" id="IPR014719">
    <property type="entry name" value="Ribosomal_bL12_C/ClpS-like"/>
</dbReference>
<dbReference type="InterPro" id="IPR008932">
    <property type="entry name" value="Ribosomal_bL12_oligo"/>
</dbReference>
<dbReference type="InterPro" id="IPR036235">
    <property type="entry name" value="Ribosomal_bL12_oligo_N_sf"/>
</dbReference>
<dbReference type="NCBIfam" id="TIGR00855">
    <property type="entry name" value="L12"/>
    <property type="match status" value="1"/>
</dbReference>
<dbReference type="PANTHER" id="PTHR45987">
    <property type="entry name" value="39S RIBOSOMAL PROTEIN L12"/>
    <property type="match status" value="1"/>
</dbReference>
<dbReference type="PANTHER" id="PTHR45987:SF4">
    <property type="entry name" value="LARGE RIBOSOMAL SUBUNIT PROTEIN BL12M"/>
    <property type="match status" value="1"/>
</dbReference>
<dbReference type="Pfam" id="PF00542">
    <property type="entry name" value="Ribosomal_L12"/>
    <property type="match status" value="1"/>
</dbReference>
<dbReference type="Pfam" id="PF16320">
    <property type="entry name" value="Ribosomal_L12_N"/>
    <property type="match status" value="1"/>
</dbReference>
<dbReference type="SUPFAM" id="SSF54736">
    <property type="entry name" value="ClpS-like"/>
    <property type="match status" value="1"/>
</dbReference>
<dbReference type="SUPFAM" id="SSF48300">
    <property type="entry name" value="Ribosomal protein L7/12, oligomerisation (N-terminal) domain"/>
    <property type="match status" value="1"/>
</dbReference>
<accession>Q1AU21</accession>
<sequence length="128" mass="13238">MALSKEELIEAIENMTVLELSELVKALEERFGVSATAVAAAPAAAGAAGAEAAAAEEEKTEFDVILQDAGAKKIQVIKEVRAATGLGLKEAKALVDEAPNPVKEGLPKEEAEALKAKLEEAGATVELK</sequence>
<organism>
    <name type="scientific">Rubrobacter xylanophilus (strain DSM 9941 / JCM 11954 / NBRC 16129 / PRD-1)</name>
    <dbReference type="NCBI Taxonomy" id="266117"/>
    <lineage>
        <taxon>Bacteria</taxon>
        <taxon>Bacillati</taxon>
        <taxon>Actinomycetota</taxon>
        <taxon>Rubrobacteria</taxon>
        <taxon>Rubrobacterales</taxon>
        <taxon>Rubrobacteraceae</taxon>
        <taxon>Rubrobacter</taxon>
    </lineage>
</organism>
<gene>
    <name evidence="1" type="primary">rplL</name>
    <name type="ordered locus">Rxyl_2163</name>
</gene>
<evidence type="ECO:0000255" key="1">
    <source>
        <dbReference type="HAMAP-Rule" id="MF_00368"/>
    </source>
</evidence>
<evidence type="ECO:0000305" key="2"/>
<keyword id="KW-1185">Reference proteome</keyword>
<keyword id="KW-0687">Ribonucleoprotein</keyword>
<keyword id="KW-0689">Ribosomal protein</keyword>